<name>PDP_STAEQ</name>
<keyword id="KW-0328">Glycosyltransferase</keyword>
<keyword id="KW-0479">Metal-binding</keyword>
<keyword id="KW-0630">Potassium</keyword>
<keyword id="KW-1185">Reference proteome</keyword>
<keyword id="KW-0808">Transferase</keyword>
<sequence length="433" mass="46272">MRMIDIIEKKRDGKSLTKEEIEFFVNGYTHGEVPDYQASSLAMAIFFQDMNDEERAALTMSMVNSGEKIDLSDINGIKVDKHSTGGVGDTTTLVLAPLVAAVGVPVAKMSGRGLGHTGGTIDKLESVKGFNVEISEKDFIKLVNDNQVAVIGQSGNLTPADKKLYALRDVTGTVNSIPLIASSIMSKKIAAGADAIVLDVKTGSGAFMKTLDDAEALAHAMVRIGNNVGRNTMAIISDMSQPLGNAIGNALELKEAIATLKGNGPKDLTELVLTLGSQMVVLAEQATSLDEARQMLIDAIKTGKALNKFKTFLSNQGGDDSIVDSPEKLPSAKYQVEFKAKKDGYITEIIANEIGVASMMLGAGRQTKEDVIDLGVGIVLNKKVGEHVEKGENILTIHTNTKEIDDILYKLDNSITIESKGEAPTLIHKIITE</sequence>
<protein>
    <recommendedName>
        <fullName>Pyrimidine-nucleoside phosphorylase</fullName>
        <shortName>PYNP</shortName>
        <shortName>Py-NPase</shortName>
        <ecNumber>2.4.2.2</ecNumber>
    </recommendedName>
</protein>
<accession>Q5HM85</accession>
<gene>
    <name type="primary">pdp</name>
    <name type="synonym">pyn</name>
    <name type="ordered locus">SERP1744</name>
</gene>
<organism>
    <name type="scientific">Staphylococcus epidermidis (strain ATCC 35984 / DSM 28319 / BCRC 17069 / CCUG 31568 / BM 3577 / RP62A)</name>
    <dbReference type="NCBI Taxonomy" id="176279"/>
    <lineage>
        <taxon>Bacteria</taxon>
        <taxon>Bacillati</taxon>
        <taxon>Bacillota</taxon>
        <taxon>Bacilli</taxon>
        <taxon>Bacillales</taxon>
        <taxon>Staphylococcaceae</taxon>
        <taxon>Staphylococcus</taxon>
    </lineage>
</organism>
<feature type="chain" id="PRO_0000269539" description="Pyrimidine-nucleoside phosphorylase">
    <location>
        <begin position="1"/>
        <end position="433"/>
    </location>
</feature>
<feature type="binding site" evidence="1">
    <location>
        <begin position="81"/>
        <end position="83"/>
    </location>
    <ligand>
        <name>phosphate</name>
        <dbReference type="ChEBI" id="CHEBI:43474"/>
    </ligand>
</feature>
<feature type="binding site" evidence="1">
    <location>
        <position position="88"/>
    </location>
    <ligand>
        <name>K(+)</name>
        <dbReference type="ChEBI" id="CHEBI:29103"/>
    </ligand>
</feature>
<feature type="binding site" evidence="1">
    <location>
        <position position="90"/>
    </location>
    <ligand>
        <name>K(+)</name>
        <dbReference type="ChEBI" id="CHEBI:29103"/>
    </ligand>
</feature>
<feature type="binding site" evidence="1">
    <location>
        <position position="92"/>
    </location>
    <ligand>
        <name>phosphate</name>
        <dbReference type="ChEBI" id="CHEBI:43474"/>
    </ligand>
</feature>
<feature type="binding site" evidence="1">
    <location>
        <begin position="108"/>
        <end position="110"/>
    </location>
    <ligand>
        <name>phosphate</name>
        <dbReference type="ChEBI" id="CHEBI:43474"/>
    </ligand>
</feature>
<feature type="binding site" evidence="1">
    <location>
        <position position="120"/>
    </location>
    <ligand>
        <name>phosphate</name>
        <dbReference type="ChEBI" id="CHEBI:43474"/>
    </ligand>
</feature>
<feature type="binding site" evidence="1">
    <location>
        <position position="168"/>
    </location>
    <ligand>
        <name>substrate</name>
    </ligand>
</feature>
<feature type="binding site" evidence="1">
    <location>
        <position position="187"/>
    </location>
    <ligand>
        <name>substrate</name>
    </ligand>
</feature>
<feature type="binding site" evidence="1">
    <location>
        <position position="243"/>
    </location>
    <ligand>
        <name>K(+)</name>
        <dbReference type="ChEBI" id="CHEBI:29103"/>
    </ligand>
</feature>
<feature type="binding site" evidence="1">
    <location>
        <position position="246"/>
    </location>
    <ligand>
        <name>K(+)</name>
        <dbReference type="ChEBI" id="CHEBI:29103"/>
    </ligand>
</feature>
<feature type="binding site" evidence="1">
    <location>
        <position position="255"/>
    </location>
    <ligand>
        <name>K(+)</name>
        <dbReference type="ChEBI" id="CHEBI:29103"/>
    </ligand>
</feature>
<reference key="1">
    <citation type="journal article" date="2005" name="J. Bacteriol.">
        <title>Insights on evolution of virulence and resistance from the complete genome analysis of an early methicillin-resistant Staphylococcus aureus strain and a biofilm-producing methicillin-resistant Staphylococcus epidermidis strain.</title>
        <authorList>
            <person name="Gill S.R."/>
            <person name="Fouts D.E."/>
            <person name="Archer G.L."/>
            <person name="Mongodin E.F."/>
            <person name="DeBoy R.T."/>
            <person name="Ravel J."/>
            <person name="Paulsen I.T."/>
            <person name="Kolonay J.F."/>
            <person name="Brinkac L.M."/>
            <person name="Beanan M.J."/>
            <person name="Dodson R.J."/>
            <person name="Daugherty S.C."/>
            <person name="Madupu R."/>
            <person name="Angiuoli S.V."/>
            <person name="Durkin A.S."/>
            <person name="Haft D.H."/>
            <person name="Vamathevan J.J."/>
            <person name="Khouri H."/>
            <person name="Utterback T.R."/>
            <person name="Lee C."/>
            <person name="Dimitrov G."/>
            <person name="Jiang L."/>
            <person name="Qin H."/>
            <person name="Weidman J."/>
            <person name="Tran K."/>
            <person name="Kang K.H."/>
            <person name="Hance I.R."/>
            <person name="Nelson K.E."/>
            <person name="Fraser C.M."/>
        </authorList>
    </citation>
    <scope>NUCLEOTIDE SEQUENCE [LARGE SCALE GENOMIC DNA]</scope>
    <source>
        <strain>ATCC 35984 / DSM 28319 / BCRC 17069 / CCUG 31568 / BM 3577 / RP62A</strain>
    </source>
</reference>
<comment type="function">
    <text evidence="1">Catalyzes phosphorolysis of the pyrimidine nucleosides uridine, thymidine and 2'-deoxyuridine with the formation of the corresponding pyrimidine base and ribose-1-phosphate.</text>
</comment>
<comment type="catalytic activity">
    <reaction evidence="1">
        <text>uridine + phosphate = alpha-D-ribose 1-phosphate + uracil</text>
        <dbReference type="Rhea" id="RHEA:24388"/>
        <dbReference type="ChEBI" id="CHEBI:16704"/>
        <dbReference type="ChEBI" id="CHEBI:17568"/>
        <dbReference type="ChEBI" id="CHEBI:43474"/>
        <dbReference type="ChEBI" id="CHEBI:57720"/>
        <dbReference type="EC" id="2.4.2.2"/>
    </reaction>
</comment>
<comment type="catalytic activity">
    <reaction evidence="1">
        <text>thymidine + phosphate = 2-deoxy-alpha-D-ribose 1-phosphate + thymine</text>
        <dbReference type="Rhea" id="RHEA:16037"/>
        <dbReference type="ChEBI" id="CHEBI:17748"/>
        <dbReference type="ChEBI" id="CHEBI:17821"/>
        <dbReference type="ChEBI" id="CHEBI:43474"/>
        <dbReference type="ChEBI" id="CHEBI:57259"/>
        <dbReference type="EC" id="2.4.2.2"/>
    </reaction>
</comment>
<comment type="catalytic activity">
    <reaction evidence="1">
        <text>2'-deoxyuridine + phosphate = 2-deoxy-alpha-D-ribose 1-phosphate + uracil</text>
        <dbReference type="Rhea" id="RHEA:22824"/>
        <dbReference type="ChEBI" id="CHEBI:16450"/>
        <dbReference type="ChEBI" id="CHEBI:17568"/>
        <dbReference type="ChEBI" id="CHEBI:43474"/>
        <dbReference type="ChEBI" id="CHEBI:57259"/>
        <dbReference type="EC" id="2.4.2.2"/>
    </reaction>
</comment>
<comment type="cofactor">
    <cofactor evidence="1">
        <name>K(+)</name>
        <dbReference type="ChEBI" id="CHEBI:29103"/>
    </cofactor>
    <text evidence="1">Binds 1 K(+) ion per subunit.</text>
</comment>
<comment type="subunit">
    <text evidence="1">Homodimer.</text>
</comment>
<comment type="similarity">
    <text evidence="2">Belongs to the thymidine/pyrimidine-nucleoside phosphorylase family.</text>
</comment>
<proteinExistence type="inferred from homology"/>
<evidence type="ECO:0000250" key="1">
    <source>
        <dbReference type="UniProtKB" id="P77836"/>
    </source>
</evidence>
<evidence type="ECO:0000305" key="2"/>
<dbReference type="EC" id="2.4.2.2"/>
<dbReference type="EMBL" id="CP000029">
    <property type="protein sequence ID" value="AAW55074.1"/>
    <property type="molecule type" value="Genomic_DNA"/>
</dbReference>
<dbReference type="RefSeq" id="WP_002440546.1">
    <property type="nucleotide sequence ID" value="NC_002976.3"/>
</dbReference>
<dbReference type="SMR" id="Q5HM85"/>
<dbReference type="STRING" id="176279.SERP1744"/>
<dbReference type="KEGG" id="ser:SERP1744"/>
<dbReference type="eggNOG" id="COG0213">
    <property type="taxonomic scope" value="Bacteria"/>
</dbReference>
<dbReference type="HOGENOM" id="CLU_025040_0_1_9"/>
<dbReference type="Proteomes" id="UP000000531">
    <property type="component" value="Chromosome"/>
</dbReference>
<dbReference type="GO" id="GO:0005829">
    <property type="term" value="C:cytosol"/>
    <property type="evidence" value="ECO:0007669"/>
    <property type="project" value="TreeGrafter"/>
</dbReference>
<dbReference type="GO" id="GO:0004645">
    <property type="term" value="F:1,4-alpha-oligoglucan phosphorylase activity"/>
    <property type="evidence" value="ECO:0007669"/>
    <property type="project" value="InterPro"/>
</dbReference>
<dbReference type="GO" id="GO:0047847">
    <property type="term" value="F:deoxyuridine phosphorylase activity"/>
    <property type="evidence" value="ECO:0007669"/>
    <property type="project" value="RHEA"/>
</dbReference>
<dbReference type="GO" id="GO:0046872">
    <property type="term" value="F:metal ion binding"/>
    <property type="evidence" value="ECO:0007669"/>
    <property type="project" value="UniProtKB-KW"/>
</dbReference>
<dbReference type="GO" id="GO:0009032">
    <property type="term" value="F:thymidine phosphorylase activity"/>
    <property type="evidence" value="ECO:0007669"/>
    <property type="project" value="TreeGrafter"/>
</dbReference>
<dbReference type="GO" id="GO:0004850">
    <property type="term" value="F:uridine phosphorylase activity"/>
    <property type="evidence" value="ECO:0007669"/>
    <property type="project" value="RHEA"/>
</dbReference>
<dbReference type="GO" id="GO:0006206">
    <property type="term" value="P:pyrimidine nucleobase metabolic process"/>
    <property type="evidence" value="ECO:0007669"/>
    <property type="project" value="InterPro"/>
</dbReference>
<dbReference type="GO" id="GO:0006213">
    <property type="term" value="P:pyrimidine nucleoside metabolic process"/>
    <property type="evidence" value="ECO:0007669"/>
    <property type="project" value="InterPro"/>
</dbReference>
<dbReference type="FunFam" id="1.20.970.10:FF:000002">
    <property type="entry name" value="Pyrimidine-nucleoside phosphorylase"/>
    <property type="match status" value="1"/>
</dbReference>
<dbReference type="FunFam" id="3.40.1030.10:FF:000003">
    <property type="entry name" value="Pyrimidine-nucleoside phosphorylase"/>
    <property type="match status" value="1"/>
</dbReference>
<dbReference type="Gene3D" id="3.40.1030.10">
    <property type="entry name" value="Nucleoside phosphorylase/phosphoribosyltransferase catalytic domain"/>
    <property type="match status" value="1"/>
</dbReference>
<dbReference type="Gene3D" id="3.90.1170.30">
    <property type="entry name" value="Pyrimidine nucleoside phosphorylase-like, C-terminal domain"/>
    <property type="match status" value="1"/>
</dbReference>
<dbReference type="Gene3D" id="1.20.970.10">
    <property type="entry name" value="Transferase, Pyrimidine Nucleoside Phosphorylase, Chain C"/>
    <property type="match status" value="1"/>
</dbReference>
<dbReference type="InterPro" id="IPR000312">
    <property type="entry name" value="Glycosyl_Trfase_fam3"/>
</dbReference>
<dbReference type="InterPro" id="IPR017459">
    <property type="entry name" value="Glycosyl_Trfase_fam3_N_dom"/>
</dbReference>
<dbReference type="InterPro" id="IPR036320">
    <property type="entry name" value="Glycosyl_Trfase_fam3_N_dom_sf"/>
</dbReference>
<dbReference type="InterPro" id="IPR035902">
    <property type="entry name" value="Nuc_phospho_transferase"/>
</dbReference>
<dbReference type="InterPro" id="IPR036566">
    <property type="entry name" value="PYNP-like_C_sf"/>
</dbReference>
<dbReference type="InterPro" id="IPR013102">
    <property type="entry name" value="PYNP_C"/>
</dbReference>
<dbReference type="InterPro" id="IPR018090">
    <property type="entry name" value="Pyrmidine_PPas_bac/euk"/>
</dbReference>
<dbReference type="InterPro" id="IPR017872">
    <property type="entry name" value="Pyrmidine_PPase_CS"/>
</dbReference>
<dbReference type="InterPro" id="IPR000053">
    <property type="entry name" value="Thymidine/pyrmidine_PPase"/>
</dbReference>
<dbReference type="NCBIfam" id="NF004490">
    <property type="entry name" value="PRK05820.1"/>
    <property type="match status" value="1"/>
</dbReference>
<dbReference type="NCBIfam" id="NF004747">
    <property type="entry name" value="PRK06078.1"/>
    <property type="match status" value="1"/>
</dbReference>
<dbReference type="NCBIfam" id="TIGR02644">
    <property type="entry name" value="Y_phosphoryl"/>
    <property type="match status" value="1"/>
</dbReference>
<dbReference type="PANTHER" id="PTHR10515">
    <property type="entry name" value="THYMIDINE PHOSPHORYLASE"/>
    <property type="match status" value="1"/>
</dbReference>
<dbReference type="PANTHER" id="PTHR10515:SF0">
    <property type="entry name" value="THYMIDINE PHOSPHORYLASE"/>
    <property type="match status" value="1"/>
</dbReference>
<dbReference type="Pfam" id="PF02885">
    <property type="entry name" value="Glycos_trans_3N"/>
    <property type="match status" value="1"/>
</dbReference>
<dbReference type="Pfam" id="PF00591">
    <property type="entry name" value="Glycos_transf_3"/>
    <property type="match status" value="1"/>
</dbReference>
<dbReference type="Pfam" id="PF07831">
    <property type="entry name" value="PYNP_C"/>
    <property type="match status" value="1"/>
</dbReference>
<dbReference type="PIRSF" id="PIRSF000478">
    <property type="entry name" value="TP_PyNP"/>
    <property type="match status" value="1"/>
</dbReference>
<dbReference type="SMART" id="SM00941">
    <property type="entry name" value="PYNP_C"/>
    <property type="match status" value="1"/>
</dbReference>
<dbReference type="SUPFAM" id="SSF52418">
    <property type="entry name" value="Nucleoside phosphorylase/phosphoribosyltransferase catalytic domain"/>
    <property type="match status" value="1"/>
</dbReference>
<dbReference type="SUPFAM" id="SSF47648">
    <property type="entry name" value="Nucleoside phosphorylase/phosphoribosyltransferase N-terminal domain"/>
    <property type="match status" value="1"/>
</dbReference>
<dbReference type="SUPFAM" id="SSF54680">
    <property type="entry name" value="Pyrimidine nucleoside phosphorylase C-terminal domain"/>
    <property type="match status" value="1"/>
</dbReference>
<dbReference type="PROSITE" id="PS00647">
    <property type="entry name" value="THYMID_PHOSPHORYLASE"/>
    <property type="match status" value="1"/>
</dbReference>